<proteinExistence type="inferred from homology"/>
<dbReference type="EC" id="2.7.7.3" evidence="1"/>
<dbReference type="EMBL" id="CP000716">
    <property type="protein sequence ID" value="ABR30383.1"/>
    <property type="molecule type" value="Genomic_DNA"/>
</dbReference>
<dbReference type="RefSeq" id="WP_012056744.1">
    <property type="nucleotide sequence ID" value="NC_009616.1"/>
</dbReference>
<dbReference type="SMR" id="A6LKD2"/>
<dbReference type="STRING" id="391009.Tmel_0516"/>
<dbReference type="KEGG" id="tme:Tmel_0516"/>
<dbReference type="eggNOG" id="COG0669">
    <property type="taxonomic scope" value="Bacteria"/>
</dbReference>
<dbReference type="HOGENOM" id="CLU_100149_0_1_0"/>
<dbReference type="OrthoDB" id="9806661at2"/>
<dbReference type="UniPathway" id="UPA00241">
    <property type="reaction ID" value="UER00355"/>
</dbReference>
<dbReference type="Proteomes" id="UP000001110">
    <property type="component" value="Chromosome"/>
</dbReference>
<dbReference type="GO" id="GO:0005737">
    <property type="term" value="C:cytoplasm"/>
    <property type="evidence" value="ECO:0007669"/>
    <property type="project" value="UniProtKB-SubCell"/>
</dbReference>
<dbReference type="GO" id="GO:0005524">
    <property type="term" value="F:ATP binding"/>
    <property type="evidence" value="ECO:0007669"/>
    <property type="project" value="UniProtKB-KW"/>
</dbReference>
<dbReference type="GO" id="GO:0004595">
    <property type="term" value="F:pantetheine-phosphate adenylyltransferase activity"/>
    <property type="evidence" value="ECO:0007669"/>
    <property type="project" value="UniProtKB-UniRule"/>
</dbReference>
<dbReference type="GO" id="GO:0015937">
    <property type="term" value="P:coenzyme A biosynthetic process"/>
    <property type="evidence" value="ECO:0007669"/>
    <property type="project" value="UniProtKB-UniRule"/>
</dbReference>
<dbReference type="CDD" id="cd02163">
    <property type="entry name" value="PPAT"/>
    <property type="match status" value="1"/>
</dbReference>
<dbReference type="Gene3D" id="3.40.50.620">
    <property type="entry name" value="HUPs"/>
    <property type="match status" value="1"/>
</dbReference>
<dbReference type="HAMAP" id="MF_00151">
    <property type="entry name" value="PPAT_bact"/>
    <property type="match status" value="1"/>
</dbReference>
<dbReference type="InterPro" id="IPR004821">
    <property type="entry name" value="Cyt_trans-like"/>
</dbReference>
<dbReference type="InterPro" id="IPR001980">
    <property type="entry name" value="PPAT"/>
</dbReference>
<dbReference type="InterPro" id="IPR014729">
    <property type="entry name" value="Rossmann-like_a/b/a_fold"/>
</dbReference>
<dbReference type="NCBIfam" id="TIGR01510">
    <property type="entry name" value="coaD_prev_kdtB"/>
    <property type="match status" value="1"/>
</dbReference>
<dbReference type="NCBIfam" id="TIGR00125">
    <property type="entry name" value="cyt_tran_rel"/>
    <property type="match status" value="1"/>
</dbReference>
<dbReference type="PANTHER" id="PTHR21342">
    <property type="entry name" value="PHOSPHOPANTETHEINE ADENYLYLTRANSFERASE"/>
    <property type="match status" value="1"/>
</dbReference>
<dbReference type="PANTHER" id="PTHR21342:SF1">
    <property type="entry name" value="PHOSPHOPANTETHEINE ADENYLYLTRANSFERASE"/>
    <property type="match status" value="1"/>
</dbReference>
<dbReference type="Pfam" id="PF01467">
    <property type="entry name" value="CTP_transf_like"/>
    <property type="match status" value="1"/>
</dbReference>
<dbReference type="PRINTS" id="PR01020">
    <property type="entry name" value="LPSBIOSNTHSS"/>
</dbReference>
<dbReference type="SUPFAM" id="SSF52374">
    <property type="entry name" value="Nucleotidylyl transferase"/>
    <property type="match status" value="1"/>
</dbReference>
<accession>A6LKD2</accession>
<organism>
    <name type="scientific">Thermosipho melanesiensis (strain DSM 12029 / CIP 104789 / BI429)</name>
    <dbReference type="NCBI Taxonomy" id="391009"/>
    <lineage>
        <taxon>Bacteria</taxon>
        <taxon>Thermotogati</taxon>
        <taxon>Thermotogota</taxon>
        <taxon>Thermotogae</taxon>
        <taxon>Thermotogales</taxon>
        <taxon>Fervidobacteriaceae</taxon>
        <taxon>Thermosipho</taxon>
    </lineage>
</organism>
<reference key="1">
    <citation type="submission" date="2007-05" db="EMBL/GenBank/DDBJ databases">
        <title>Complete sequence of Thermosipho melanesiensis BI429.</title>
        <authorList>
            <consortium name="US DOE Joint Genome Institute"/>
            <person name="Copeland A."/>
            <person name="Lucas S."/>
            <person name="Lapidus A."/>
            <person name="Barry K."/>
            <person name="Glavina del Rio T."/>
            <person name="Dalin E."/>
            <person name="Tice H."/>
            <person name="Pitluck S."/>
            <person name="Chertkov O."/>
            <person name="Brettin T."/>
            <person name="Bruce D."/>
            <person name="Detter J.C."/>
            <person name="Han C."/>
            <person name="Schmutz J."/>
            <person name="Larimer F."/>
            <person name="Land M."/>
            <person name="Hauser L."/>
            <person name="Kyrpides N."/>
            <person name="Mikhailova N."/>
            <person name="Nelson K."/>
            <person name="Gogarten J.P."/>
            <person name="Noll K."/>
            <person name="Richardson P."/>
        </authorList>
    </citation>
    <scope>NUCLEOTIDE SEQUENCE [LARGE SCALE GENOMIC DNA]</scope>
    <source>
        <strain>DSM 12029 / CIP 104789 / BI429</strain>
    </source>
</reference>
<sequence>MKAIYPGSFDPITYGHLDIIKRATKIFSEVYVVVMENKRKNYTFTLEERIKMIEECTENIKNVKIDYFRGLLIDYLKMHKIDVIIRGLRAVTDFEYELQMAMANKEMCPNVDTVFLMTDKKYSFISSSLVKEVAYFGGDISRWVPKSVERKLRKKVNGV</sequence>
<feature type="chain" id="PRO_1000011269" description="Phosphopantetheine adenylyltransferase">
    <location>
        <begin position="1"/>
        <end position="159"/>
    </location>
</feature>
<feature type="binding site" evidence="1">
    <location>
        <begin position="8"/>
        <end position="9"/>
    </location>
    <ligand>
        <name>ATP</name>
        <dbReference type="ChEBI" id="CHEBI:30616"/>
    </ligand>
</feature>
<feature type="binding site" evidence="1">
    <location>
        <position position="8"/>
    </location>
    <ligand>
        <name>substrate</name>
    </ligand>
</feature>
<feature type="binding site" evidence="1">
    <location>
        <position position="16"/>
    </location>
    <ligand>
        <name>ATP</name>
        <dbReference type="ChEBI" id="CHEBI:30616"/>
    </ligand>
</feature>
<feature type="binding site" evidence="1">
    <location>
        <position position="40"/>
    </location>
    <ligand>
        <name>substrate</name>
    </ligand>
</feature>
<feature type="binding site" evidence="1">
    <location>
        <position position="72"/>
    </location>
    <ligand>
        <name>substrate</name>
    </ligand>
</feature>
<feature type="binding site" evidence="1">
    <location>
        <position position="86"/>
    </location>
    <ligand>
        <name>substrate</name>
    </ligand>
</feature>
<feature type="binding site" evidence="1">
    <location>
        <begin position="87"/>
        <end position="89"/>
    </location>
    <ligand>
        <name>ATP</name>
        <dbReference type="ChEBI" id="CHEBI:30616"/>
    </ligand>
</feature>
<feature type="binding site" evidence="1">
    <location>
        <position position="97"/>
    </location>
    <ligand>
        <name>ATP</name>
        <dbReference type="ChEBI" id="CHEBI:30616"/>
    </ligand>
</feature>
<feature type="binding site" evidence="1">
    <location>
        <begin position="122"/>
        <end position="128"/>
    </location>
    <ligand>
        <name>ATP</name>
        <dbReference type="ChEBI" id="CHEBI:30616"/>
    </ligand>
</feature>
<feature type="site" description="Transition state stabilizer" evidence="1">
    <location>
        <position position="16"/>
    </location>
</feature>
<gene>
    <name evidence="1" type="primary">coaD</name>
    <name type="ordered locus">Tmel_0516</name>
</gene>
<keyword id="KW-0067">ATP-binding</keyword>
<keyword id="KW-0173">Coenzyme A biosynthesis</keyword>
<keyword id="KW-0963">Cytoplasm</keyword>
<keyword id="KW-0460">Magnesium</keyword>
<keyword id="KW-0547">Nucleotide-binding</keyword>
<keyword id="KW-0548">Nucleotidyltransferase</keyword>
<keyword id="KW-0808">Transferase</keyword>
<name>COAD_THEM4</name>
<comment type="function">
    <text evidence="1">Reversibly transfers an adenylyl group from ATP to 4'-phosphopantetheine, yielding dephospho-CoA (dPCoA) and pyrophosphate.</text>
</comment>
<comment type="catalytic activity">
    <reaction evidence="1">
        <text>(R)-4'-phosphopantetheine + ATP + H(+) = 3'-dephospho-CoA + diphosphate</text>
        <dbReference type="Rhea" id="RHEA:19801"/>
        <dbReference type="ChEBI" id="CHEBI:15378"/>
        <dbReference type="ChEBI" id="CHEBI:30616"/>
        <dbReference type="ChEBI" id="CHEBI:33019"/>
        <dbReference type="ChEBI" id="CHEBI:57328"/>
        <dbReference type="ChEBI" id="CHEBI:61723"/>
        <dbReference type="EC" id="2.7.7.3"/>
    </reaction>
</comment>
<comment type="cofactor">
    <cofactor evidence="1">
        <name>Mg(2+)</name>
        <dbReference type="ChEBI" id="CHEBI:18420"/>
    </cofactor>
</comment>
<comment type="pathway">
    <text evidence="1">Cofactor biosynthesis; coenzyme A biosynthesis; CoA from (R)-pantothenate: step 4/5.</text>
</comment>
<comment type="subunit">
    <text evidence="1">Homohexamer.</text>
</comment>
<comment type="subcellular location">
    <subcellularLocation>
        <location evidence="1">Cytoplasm</location>
    </subcellularLocation>
</comment>
<comment type="similarity">
    <text evidence="1">Belongs to the bacterial CoaD family.</text>
</comment>
<evidence type="ECO:0000255" key="1">
    <source>
        <dbReference type="HAMAP-Rule" id="MF_00151"/>
    </source>
</evidence>
<protein>
    <recommendedName>
        <fullName evidence="1">Phosphopantetheine adenylyltransferase</fullName>
        <ecNumber evidence="1">2.7.7.3</ecNumber>
    </recommendedName>
    <alternativeName>
        <fullName evidence="1">Dephospho-CoA pyrophosphorylase</fullName>
    </alternativeName>
    <alternativeName>
        <fullName evidence="1">Pantetheine-phosphate adenylyltransferase</fullName>
        <shortName evidence="1">PPAT</shortName>
    </alternativeName>
</protein>